<reference key="1">
    <citation type="submission" date="2005-10" db="EMBL/GenBank/DDBJ databases">
        <title>Complete sequence of Pelobacter carbinolicus DSM 2380.</title>
        <authorList>
            <person name="Copeland A."/>
            <person name="Lucas S."/>
            <person name="Lapidus A."/>
            <person name="Barry K."/>
            <person name="Detter J.C."/>
            <person name="Glavina T."/>
            <person name="Hammon N."/>
            <person name="Israni S."/>
            <person name="Pitluck S."/>
            <person name="Chertkov O."/>
            <person name="Schmutz J."/>
            <person name="Larimer F."/>
            <person name="Land M."/>
            <person name="Kyrpides N."/>
            <person name="Ivanova N."/>
            <person name="Richardson P."/>
        </authorList>
    </citation>
    <scope>NUCLEOTIDE SEQUENCE [LARGE SCALE GENOMIC DNA]</scope>
    <source>
        <strain>DSM 2380 / NBRC 103641 / GraBd1</strain>
    </source>
</reference>
<proteinExistence type="inferred from homology"/>
<feature type="chain" id="PRO_0000365907" description="ATP synthase subunit c 1">
    <location>
        <begin position="1"/>
        <end position="88"/>
    </location>
</feature>
<feature type="transmembrane region" description="Helical" evidence="1">
    <location>
        <begin position="4"/>
        <end position="24"/>
    </location>
</feature>
<feature type="transmembrane region" description="Helical" evidence="1">
    <location>
        <begin position="53"/>
        <end position="73"/>
    </location>
</feature>
<feature type="site" description="Reversibly protonated during proton transport" evidence="1">
    <location>
        <position position="59"/>
    </location>
</feature>
<gene>
    <name evidence="1" type="primary">atpE1</name>
    <name type="ordered locus">Pcar_0016</name>
</gene>
<comment type="function">
    <text evidence="1">F(1)F(0) ATP synthase produces ATP from ADP in the presence of a proton or sodium gradient. F-type ATPases consist of two structural domains, F(1) containing the extramembraneous catalytic core and F(0) containing the membrane proton channel, linked together by a central stalk and a peripheral stalk. During catalysis, ATP synthesis in the catalytic domain of F(1) is coupled via a rotary mechanism of the central stalk subunits to proton translocation.</text>
</comment>
<comment type="function">
    <text evidence="1">Key component of the F(0) channel; it plays a direct role in translocation across the membrane. A homomeric c-ring of between 10-14 subunits forms the central stalk rotor element with the F(1) delta and epsilon subunits.</text>
</comment>
<comment type="subunit">
    <text evidence="1">F-type ATPases have 2 components, F(1) - the catalytic core - and F(0) - the membrane proton channel. F(1) has five subunits: alpha(3), beta(3), gamma(1), delta(1), epsilon(1). F(0) has three main subunits: a(1), b(2) and c(10-14). The alpha and beta chains form an alternating ring which encloses part of the gamma chain. F(1) is attached to F(0) by a central stalk formed by the gamma and epsilon chains, while a peripheral stalk is formed by the delta and b chains.</text>
</comment>
<comment type="subcellular location">
    <subcellularLocation>
        <location evidence="1">Cell inner membrane</location>
        <topology evidence="1">Multi-pass membrane protein</topology>
    </subcellularLocation>
</comment>
<comment type="similarity">
    <text evidence="1">Belongs to the ATPase C chain family.</text>
</comment>
<dbReference type="EMBL" id="CP000142">
    <property type="protein sequence ID" value="ABA87279.1"/>
    <property type="molecule type" value="Genomic_DNA"/>
</dbReference>
<dbReference type="RefSeq" id="WP_011339663.1">
    <property type="nucleotide sequence ID" value="NC_007498.2"/>
</dbReference>
<dbReference type="SMR" id="Q3A8L3"/>
<dbReference type="STRING" id="338963.Pcar_0016"/>
<dbReference type="KEGG" id="pca:Pcar_0016"/>
<dbReference type="eggNOG" id="COG0636">
    <property type="taxonomic scope" value="Bacteria"/>
</dbReference>
<dbReference type="HOGENOM" id="CLU_148047_2_0_7"/>
<dbReference type="OrthoDB" id="5296711at2"/>
<dbReference type="Proteomes" id="UP000002534">
    <property type="component" value="Chromosome"/>
</dbReference>
<dbReference type="GO" id="GO:0005886">
    <property type="term" value="C:plasma membrane"/>
    <property type="evidence" value="ECO:0007669"/>
    <property type="project" value="UniProtKB-SubCell"/>
</dbReference>
<dbReference type="GO" id="GO:0045259">
    <property type="term" value="C:proton-transporting ATP synthase complex"/>
    <property type="evidence" value="ECO:0007669"/>
    <property type="project" value="UniProtKB-KW"/>
</dbReference>
<dbReference type="GO" id="GO:0033177">
    <property type="term" value="C:proton-transporting two-sector ATPase complex, proton-transporting domain"/>
    <property type="evidence" value="ECO:0007669"/>
    <property type="project" value="InterPro"/>
</dbReference>
<dbReference type="GO" id="GO:0008289">
    <property type="term" value="F:lipid binding"/>
    <property type="evidence" value="ECO:0007669"/>
    <property type="project" value="UniProtKB-KW"/>
</dbReference>
<dbReference type="GO" id="GO:0046933">
    <property type="term" value="F:proton-transporting ATP synthase activity, rotational mechanism"/>
    <property type="evidence" value="ECO:0007669"/>
    <property type="project" value="UniProtKB-UniRule"/>
</dbReference>
<dbReference type="CDD" id="cd18121">
    <property type="entry name" value="ATP-synt_Fo_c"/>
    <property type="match status" value="1"/>
</dbReference>
<dbReference type="Gene3D" id="1.20.120.610">
    <property type="entry name" value="lithium bound rotor ring of v- atpase"/>
    <property type="match status" value="1"/>
</dbReference>
<dbReference type="HAMAP" id="MF_01396">
    <property type="entry name" value="ATP_synth_c_bact"/>
    <property type="match status" value="1"/>
</dbReference>
<dbReference type="InterPro" id="IPR005953">
    <property type="entry name" value="ATP_synth_csu_bac/chlpt"/>
</dbReference>
<dbReference type="InterPro" id="IPR000454">
    <property type="entry name" value="ATP_synth_F0_csu"/>
</dbReference>
<dbReference type="InterPro" id="IPR020537">
    <property type="entry name" value="ATP_synth_F0_csu_DDCD_BS"/>
</dbReference>
<dbReference type="InterPro" id="IPR002379">
    <property type="entry name" value="ATPase_proteolipid_c-like_dom"/>
</dbReference>
<dbReference type="InterPro" id="IPR035921">
    <property type="entry name" value="F/V-ATP_Csub_sf"/>
</dbReference>
<dbReference type="NCBIfam" id="TIGR01260">
    <property type="entry name" value="ATP_synt_c"/>
    <property type="match status" value="1"/>
</dbReference>
<dbReference type="Pfam" id="PF00137">
    <property type="entry name" value="ATP-synt_C"/>
    <property type="match status" value="1"/>
</dbReference>
<dbReference type="PRINTS" id="PR00124">
    <property type="entry name" value="ATPASEC"/>
</dbReference>
<dbReference type="SUPFAM" id="SSF81333">
    <property type="entry name" value="F1F0 ATP synthase subunit C"/>
    <property type="match status" value="1"/>
</dbReference>
<dbReference type="PROSITE" id="PS00605">
    <property type="entry name" value="ATPASE_C"/>
    <property type="match status" value="1"/>
</dbReference>
<evidence type="ECO:0000255" key="1">
    <source>
        <dbReference type="HAMAP-Rule" id="MF_01396"/>
    </source>
</evidence>
<name>ATPL1_SYNC1</name>
<keyword id="KW-0066">ATP synthesis</keyword>
<keyword id="KW-0997">Cell inner membrane</keyword>
<keyword id="KW-1003">Cell membrane</keyword>
<keyword id="KW-0138">CF(0)</keyword>
<keyword id="KW-0375">Hydrogen ion transport</keyword>
<keyword id="KW-0406">Ion transport</keyword>
<keyword id="KW-0446">Lipid-binding</keyword>
<keyword id="KW-0472">Membrane</keyword>
<keyword id="KW-1185">Reference proteome</keyword>
<keyword id="KW-0812">Transmembrane</keyword>
<keyword id="KW-1133">Transmembrane helix</keyword>
<keyword id="KW-0813">Transport</keyword>
<protein>
    <recommendedName>
        <fullName evidence="1">ATP synthase subunit c 1</fullName>
    </recommendedName>
    <alternativeName>
        <fullName evidence="1">ATP synthase F(0) sector subunit c 1</fullName>
    </alternativeName>
    <alternativeName>
        <fullName evidence="1">F-type ATPase subunit c 1</fullName>
        <shortName evidence="1">F-ATPase subunit c 1</shortName>
    </alternativeName>
    <alternativeName>
        <fullName evidence="1">Lipid-binding protein 1</fullName>
    </alternativeName>
</protein>
<organism>
    <name type="scientific">Syntrophotalea carbinolica (strain DSM 2380 / NBRC 103641 / GraBd1)</name>
    <name type="common">Pelobacter carbinolicus</name>
    <dbReference type="NCBI Taxonomy" id="338963"/>
    <lineage>
        <taxon>Bacteria</taxon>
        <taxon>Pseudomonadati</taxon>
        <taxon>Thermodesulfobacteriota</taxon>
        <taxon>Desulfuromonadia</taxon>
        <taxon>Desulfuromonadales</taxon>
        <taxon>Syntrophotaleaceae</taxon>
        <taxon>Syntrophotalea</taxon>
    </lineage>
</organism>
<sequence length="88" mass="9159">MDFFTWVIITAGFGMAFGSLGTAIGQGLAVKSALEGVARNPGASGKILTTMMIGLAMVESLAIYVFVVSMIILFANPFKDVVLELVAG</sequence>
<accession>Q3A8L3</accession>